<feature type="chain" id="PRO_0000429044" description="Putative DNA 3'-5' helicase Rad25">
    <location>
        <begin position="1"/>
        <end position="600"/>
    </location>
</feature>
<feature type="domain" description="Helicase ATP-binding" evidence="1">
    <location>
        <begin position="253"/>
        <end position="402"/>
    </location>
</feature>
<feature type="domain" description="Helicase C-terminal" evidence="1">
    <location>
        <begin position="457"/>
        <end position="600"/>
    </location>
</feature>
<feature type="region of interest" description="Disordered" evidence="2">
    <location>
        <begin position="569"/>
        <end position="600"/>
    </location>
</feature>
<feature type="short sequence motif" description="DEAH box">
    <location>
        <begin position="356"/>
        <end position="359"/>
    </location>
</feature>
<feature type="compositionally biased region" description="Basic and acidic residues" evidence="2">
    <location>
        <begin position="590"/>
        <end position="600"/>
    </location>
</feature>
<feature type="binding site" evidence="1">
    <location>
        <begin position="266"/>
        <end position="273"/>
    </location>
    <ligand>
        <name>ATP</name>
        <dbReference type="ChEBI" id="CHEBI:30616"/>
    </ligand>
</feature>
<evidence type="ECO:0000255" key="1">
    <source>
        <dbReference type="HAMAP-Rule" id="MF_01489"/>
    </source>
</evidence>
<evidence type="ECO:0000256" key="2">
    <source>
        <dbReference type="SAM" id="MobiDB-lite"/>
    </source>
</evidence>
<evidence type="ECO:0000305" key="3"/>
<organism>
    <name type="scientific">Halobacterium salinarum (strain ATCC 700922 / JCM 11081 / NRC-1)</name>
    <name type="common">Halobacterium halobium</name>
    <dbReference type="NCBI Taxonomy" id="64091"/>
    <lineage>
        <taxon>Archaea</taxon>
        <taxon>Methanobacteriati</taxon>
        <taxon>Methanobacteriota</taxon>
        <taxon>Stenosarchaea group</taxon>
        <taxon>Halobacteria</taxon>
        <taxon>Halobacteriales</taxon>
        <taxon>Halobacteriaceae</taxon>
        <taxon>Halobacterium</taxon>
        <taxon>Halobacterium salinarum NRC-34001</taxon>
    </lineage>
</organism>
<reference key="1">
    <citation type="journal article" date="2000" name="Proc. Natl. Acad. Sci. U.S.A.">
        <title>Genome sequence of Halobacterium species NRC-1.</title>
        <authorList>
            <person name="Ng W.V."/>
            <person name="Kennedy S.P."/>
            <person name="Mahairas G.G."/>
            <person name="Berquist B."/>
            <person name="Pan M."/>
            <person name="Shukla H.D."/>
            <person name="Lasky S.R."/>
            <person name="Baliga N.S."/>
            <person name="Thorsson V."/>
            <person name="Sbrogna J."/>
            <person name="Swartzell S."/>
            <person name="Weir D."/>
            <person name="Hall J."/>
            <person name="Dahl T.A."/>
            <person name="Welti R."/>
            <person name="Goo Y.A."/>
            <person name="Leithauser B."/>
            <person name="Keller K."/>
            <person name="Cruz R."/>
            <person name="Danson M.J."/>
            <person name="Hough D.W."/>
            <person name="Maddocks D.G."/>
            <person name="Jablonski P.E."/>
            <person name="Krebs M.P."/>
            <person name="Angevine C.M."/>
            <person name="Dale H."/>
            <person name="Isenbarger T.A."/>
            <person name="Peck R.F."/>
            <person name="Pohlschroder M."/>
            <person name="Spudich J.L."/>
            <person name="Jung K.-H."/>
            <person name="Alam M."/>
            <person name="Freitas T."/>
            <person name="Hou S."/>
            <person name="Daniels C.J."/>
            <person name="Dennis P.P."/>
            <person name="Omer A.D."/>
            <person name="Ebhardt H."/>
            <person name="Lowe T.M."/>
            <person name="Liang P."/>
            <person name="Riley M."/>
            <person name="Hood L."/>
            <person name="DasSarma S."/>
        </authorList>
    </citation>
    <scope>NUCLEOTIDE SEQUENCE [LARGE SCALE GENOMIC DNA]</scope>
    <source>
        <strain>ATCC 700922 / JCM 11081 / NRC-1</strain>
    </source>
</reference>
<sequence length="600" mass="66902">MTDISKDRFLDALEGVGRPVATAEQIARELDCTQATAADALAALAADDEVERANVEPDPVVWYPRDWLELTDRERIVPFPDRREIIVDQPSQLTRAQLSRVAHLTDTTRTGSYRYEVRAEDVWAAPFDSLSDLVAAITELLPRDCPTLIEWVREQWTRATRFRLRTHDDGYVVLEAATDSLLGNVAEQKLDDDVLRAPISDTEAWVAAEQVAPLKRTLYEAGYPVRDDRDLESGEPLAVDLHLDLRPYQQDWVDRFEDASAGVLVGPPGSGKTVAAMGALESVGGETLVLVPSRELATQWREELLANTSLTGDQIGEYHGGEKRVRPVTIATYQTAGMDRHRHVFDDREWGLIVYDEVHHIPAEVARRSASLQSKHRLGLTATPVREDDKEADIYTLVGRPIGTDWDALFDAGFVAEPEVEIRYVPWRDDDDRYEYAAASGHTRRRLAAENPAKEAEIEHLVDQHGDTQALVFVDYLSQGERIAERLDAPFVNGETPHSRRETHFDQFRTGALDALVVSRIGDEGIDLPDAEFAVVASGLGGSRRQGAQRAGRTMRPGSQSLLFVLATRGTEEEDHARSRMRHLSTKGVRVTESDASHSP</sequence>
<comment type="catalytic activity">
    <reaction evidence="1">
        <text>Couples ATP hydrolysis with the unwinding of duplex DNA by translocating in the 3'-5' direction.</text>
        <dbReference type="EC" id="5.6.2.4"/>
    </reaction>
</comment>
<comment type="catalytic activity">
    <reaction evidence="1">
        <text>ATP + H2O = ADP + phosphate + H(+)</text>
        <dbReference type="Rhea" id="RHEA:13065"/>
        <dbReference type="ChEBI" id="CHEBI:15377"/>
        <dbReference type="ChEBI" id="CHEBI:15378"/>
        <dbReference type="ChEBI" id="CHEBI:30616"/>
        <dbReference type="ChEBI" id="CHEBI:43474"/>
        <dbReference type="ChEBI" id="CHEBI:456216"/>
        <dbReference type="EC" id="5.6.2.4"/>
    </reaction>
</comment>
<comment type="similarity">
    <text evidence="1">Belongs to the helicase family. RAD25/XPB subfamily.</text>
</comment>
<comment type="sequence caution" evidence="3">
    <conflict type="erroneous initiation">
        <sequence resource="EMBL-CDS" id="AAG19725"/>
    </conflict>
    <text>Truncated N-terminus.</text>
</comment>
<proteinExistence type="inferred from homology"/>
<name>RAD25_HALSA</name>
<keyword id="KW-0067">ATP-binding</keyword>
<keyword id="KW-0347">Helicase</keyword>
<keyword id="KW-0378">Hydrolase</keyword>
<keyword id="KW-0413">Isomerase</keyword>
<keyword id="KW-0547">Nucleotide-binding</keyword>
<keyword id="KW-1185">Reference proteome</keyword>
<accession>Q9HPZ2</accession>
<dbReference type="EC" id="5.6.2.4" evidence="1"/>
<dbReference type="EMBL" id="AE004437">
    <property type="protein sequence ID" value="AAG19725.1"/>
    <property type="status" value="ALT_INIT"/>
    <property type="molecule type" value="Genomic_DNA"/>
</dbReference>
<dbReference type="PIR" id="A84295">
    <property type="entry name" value="A84295"/>
</dbReference>
<dbReference type="RefSeq" id="WP_012289321.1">
    <property type="nucleotide sequence ID" value="NC_002607.1"/>
</dbReference>
<dbReference type="SMR" id="Q9HPZ2"/>
<dbReference type="STRING" id="64091.VNG_1406G"/>
<dbReference type="PaxDb" id="64091-VNG_1406G"/>
<dbReference type="KEGG" id="hal:VNG_1406G"/>
<dbReference type="PATRIC" id="fig|64091.14.peg.1074"/>
<dbReference type="HOGENOM" id="CLU_074056_0_0_2"/>
<dbReference type="InParanoid" id="Q9HPZ2"/>
<dbReference type="OrthoDB" id="8379at2157"/>
<dbReference type="PhylomeDB" id="Q9HPZ2"/>
<dbReference type="Proteomes" id="UP000000554">
    <property type="component" value="Chromosome"/>
</dbReference>
<dbReference type="GO" id="GO:0005524">
    <property type="term" value="F:ATP binding"/>
    <property type="evidence" value="ECO:0007669"/>
    <property type="project" value="UniProtKB-UniRule"/>
</dbReference>
<dbReference type="GO" id="GO:0016887">
    <property type="term" value="F:ATP hydrolysis activity"/>
    <property type="evidence" value="ECO:0007669"/>
    <property type="project" value="RHEA"/>
</dbReference>
<dbReference type="GO" id="GO:0140097">
    <property type="term" value="F:catalytic activity, acting on DNA"/>
    <property type="evidence" value="ECO:0007669"/>
    <property type="project" value="UniProtKB-ARBA"/>
</dbReference>
<dbReference type="GO" id="GO:0003677">
    <property type="term" value="F:DNA binding"/>
    <property type="evidence" value="ECO:0007669"/>
    <property type="project" value="InterPro"/>
</dbReference>
<dbReference type="GO" id="GO:0004386">
    <property type="term" value="F:helicase activity"/>
    <property type="evidence" value="ECO:0007669"/>
    <property type="project" value="UniProtKB-UniRule"/>
</dbReference>
<dbReference type="CDD" id="cd18789">
    <property type="entry name" value="SF2_C_XPB"/>
    <property type="match status" value="1"/>
</dbReference>
<dbReference type="Gene3D" id="3.40.50.300">
    <property type="entry name" value="P-loop containing nucleotide triphosphate hydrolases"/>
    <property type="match status" value="2"/>
</dbReference>
<dbReference type="HAMAP" id="MF_01489">
    <property type="entry name" value="Helicase_Rad25_arch"/>
    <property type="match status" value="1"/>
</dbReference>
<dbReference type="InterPro" id="IPR050615">
    <property type="entry name" value="ATP-dep_DNA_Helicase"/>
</dbReference>
<dbReference type="InterPro" id="IPR032438">
    <property type="entry name" value="ERCC3_RAD25_C"/>
</dbReference>
<dbReference type="InterPro" id="IPR006935">
    <property type="entry name" value="Helicase/UvrB_N"/>
</dbReference>
<dbReference type="InterPro" id="IPR014001">
    <property type="entry name" value="Helicase_ATP-bd"/>
</dbReference>
<dbReference type="InterPro" id="IPR001650">
    <property type="entry name" value="Helicase_C-like"/>
</dbReference>
<dbReference type="InterPro" id="IPR030882">
    <property type="entry name" value="Helicase_Rad25_arc"/>
</dbReference>
<dbReference type="InterPro" id="IPR027417">
    <property type="entry name" value="P-loop_NTPase"/>
</dbReference>
<dbReference type="PANTHER" id="PTHR11274:SF0">
    <property type="entry name" value="GENERAL TRANSCRIPTION AND DNA REPAIR FACTOR IIH HELICASE SUBUNIT XPB"/>
    <property type="match status" value="1"/>
</dbReference>
<dbReference type="PANTHER" id="PTHR11274">
    <property type="entry name" value="RAD25/XP-B DNA REPAIR HELICASE"/>
    <property type="match status" value="1"/>
</dbReference>
<dbReference type="Pfam" id="PF16203">
    <property type="entry name" value="ERCC3_RAD25_C"/>
    <property type="match status" value="1"/>
</dbReference>
<dbReference type="Pfam" id="PF04851">
    <property type="entry name" value="ResIII"/>
    <property type="match status" value="1"/>
</dbReference>
<dbReference type="PRINTS" id="PR00851">
    <property type="entry name" value="XRODRMPGMNTB"/>
</dbReference>
<dbReference type="SMART" id="SM00487">
    <property type="entry name" value="DEXDc"/>
    <property type="match status" value="1"/>
</dbReference>
<dbReference type="SMART" id="SM00490">
    <property type="entry name" value="HELICc"/>
    <property type="match status" value="1"/>
</dbReference>
<dbReference type="SUPFAM" id="SSF52540">
    <property type="entry name" value="P-loop containing nucleoside triphosphate hydrolases"/>
    <property type="match status" value="1"/>
</dbReference>
<dbReference type="PROSITE" id="PS51192">
    <property type="entry name" value="HELICASE_ATP_BIND_1"/>
    <property type="match status" value="1"/>
</dbReference>
<dbReference type="PROSITE" id="PS51194">
    <property type="entry name" value="HELICASE_CTER"/>
    <property type="match status" value="1"/>
</dbReference>
<protein>
    <recommendedName>
        <fullName evidence="1">Putative DNA 3'-5' helicase Rad25</fullName>
        <ecNumber evidence="1">5.6.2.4</ecNumber>
    </recommendedName>
</protein>
<gene>
    <name evidence="1" type="primary">rad25</name>
    <name type="synonym">rhl</name>
    <name type="ordered locus">VNG_1406G</name>
</gene>